<comment type="similarity">
    <text evidence="1">Belongs to the SfsA family.</text>
</comment>
<name>SFSA_CLOAB</name>
<proteinExistence type="inferred from homology"/>
<dbReference type="EMBL" id="AE001437">
    <property type="protein sequence ID" value="AAK78128.1"/>
    <property type="molecule type" value="Genomic_DNA"/>
</dbReference>
<dbReference type="PIR" id="E96917">
    <property type="entry name" value="E96917"/>
</dbReference>
<dbReference type="RefSeq" id="NP_346788.1">
    <property type="nucleotide sequence ID" value="NC_003030.1"/>
</dbReference>
<dbReference type="RefSeq" id="WP_010963470.1">
    <property type="nucleotide sequence ID" value="NC_003030.1"/>
</dbReference>
<dbReference type="SMR" id="Q97MP8"/>
<dbReference type="STRING" id="272562.CA_C0144"/>
<dbReference type="GeneID" id="44996626"/>
<dbReference type="KEGG" id="cac:CA_C0144"/>
<dbReference type="PATRIC" id="fig|272562.8.peg.327"/>
<dbReference type="eggNOG" id="COG1489">
    <property type="taxonomic scope" value="Bacteria"/>
</dbReference>
<dbReference type="HOGENOM" id="CLU_052299_1_0_9"/>
<dbReference type="OrthoDB" id="9802365at2"/>
<dbReference type="Proteomes" id="UP000000814">
    <property type="component" value="Chromosome"/>
</dbReference>
<dbReference type="GO" id="GO:0003677">
    <property type="term" value="F:DNA binding"/>
    <property type="evidence" value="ECO:0007669"/>
    <property type="project" value="InterPro"/>
</dbReference>
<dbReference type="CDD" id="cd22359">
    <property type="entry name" value="SfsA-like_bacterial"/>
    <property type="match status" value="1"/>
</dbReference>
<dbReference type="FunFam" id="2.40.50.580:FF:000002">
    <property type="entry name" value="Sugar fermentation stimulation protein homolog"/>
    <property type="match status" value="1"/>
</dbReference>
<dbReference type="Gene3D" id="2.40.50.580">
    <property type="match status" value="1"/>
</dbReference>
<dbReference type="Gene3D" id="3.40.1350.60">
    <property type="match status" value="1"/>
</dbReference>
<dbReference type="HAMAP" id="MF_00095">
    <property type="entry name" value="SfsA"/>
    <property type="match status" value="1"/>
</dbReference>
<dbReference type="InterPro" id="IPR005224">
    <property type="entry name" value="SfsA"/>
</dbReference>
<dbReference type="InterPro" id="IPR040452">
    <property type="entry name" value="SfsA_C"/>
</dbReference>
<dbReference type="InterPro" id="IPR041465">
    <property type="entry name" value="SfsA_N"/>
</dbReference>
<dbReference type="NCBIfam" id="TIGR00230">
    <property type="entry name" value="sfsA"/>
    <property type="match status" value="1"/>
</dbReference>
<dbReference type="PANTHER" id="PTHR30545">
    <property type="entry name" value="SUGAR FERMENTATION STIMULATION PROTEIN A"/>
    <property type="match status" value="1"/>
</dbReference>
<dbReference type="PANTHER" id="PTHR30545:SF2">
    <property type="entry name" value="SUGAR FERMENTATION STIMULATION PROTEIN A"/>
    <property type="match status" value="1"/>
</dbReference>
<dbReference type="Pfam" id="PF03749">
    <property type="entry name" value="SfsA"/>
    <property type="match status" value="1"/>
</dbReference>
<dbReference type="Pfam" id="PF17746">
    <property type="entry name" value="SfsA_N"/>
    <property type="match status" value="1"/>
</dbReference>
<reference key="1">
    <citation type="journal article" date="2001" name="J. Bacteriol.">
        <title>Genome sequence and comparative analysis of the solvent-producing bacterium Clostridium acetobutylicum.</title>
        <authorList>
            <person name="Noelling J."/>
            <person name="Breton G."/>
            <person name="Omelchenko M.V."/>
            <person name="Makarova K.S."/>
            <person name="Zeng Q."/>
            <person name="Gibson R."/>
            <person name="Lee H.M."/>
            <person name="Dubois J."/>
            <person name="Qiu D."/>
            <person name="Hitti J."/>
            <person name="Wolf Y.I."/>
            <person name="Tatusov R.L."/>
            <person name="Sabathe F."/>
            <person name="Doucette-Stamm L.A."/>
            <person name="Soucaille P."/>
            <person name="Daly M.J."/>
            <person name="Bennett G.N."/>
            <person name="Koonin E.V."/>
            <person name="Smith D.R."/>
        </authorList>
    </citation>
    <scope>NUCLEOTIDE SEQUENCE [LARGE SCALE GENOMIC DNA]</scope>
    <source>
        <strain>ATCC 824 / DSM 792 / JCM 1419 / IAM 19013 / LMG 5710 / NBRC 13948 / NRRL B-527 / VKM B-1787 / 2291 / W</strain>
    </source>
</reference>
<protein>
    <recommendedName>
        <fullName evidence="1">Sugar fermentation stimulation protein homolog</fullName>
    </recommendedName>
</protein>
<sequence length="230" mass="26468">MKIDNMTKLAKFVKRPNRFQAYIELEGEEMMVHVPNTGRCREILLPNCTVVLREENNPNRKTKYDLIGAYKGEKFINIDSQIPNKVVYEALYNKKVESLAKYNIIMKEKTFKNSRFDFRLENDEGEVYFLEVKGVTLEDKGVARFPDAPTERGAKHLKELVEAKKSGYGAGVLFLMQMDNISEFRPHDEMDKMFGEALRYAAINGVDVMAYECSVDEKSITLTKSVKIVL</sequence>
<evidence type="ECO:0000255" key="1">
    <source>
        <dbReference type="HAMAP-Rule" id="MF_00095"/>
    </source>
</evidence>
<keyword id="KW-1185">Reference proteome</keyword>
<gene>
    <name evidence="1" type="primary">sfsA</name>
    <name type="ordered locus">CA_C0144</name>
</gene>
<organism>
    <name type="scientific">Clostridium acetobutylicum (strain ATCC 824 / DSM 792 / JCM 1419 / IAM 19013 / LMG 5710 / NBRC 13948 / NRRL B-527 / VKM B-1787 / 2291 / W)</name>
    <dbReference type="NCBI Taxonomy" id="272562"/>
    <lineage>
        <taxon>Bacteria</taxon>
        <taxon>Bacillati</taxon>
        <taxon>Bacillota</taxon>
        <taxon>Clostridia</taxon>
        <taxon>Eubacteriales</taxon>
        <taxon>Clostridiaceae</taxon>
        <taxon>Clostridium</taxon>
    </lineage>
</organism>
<accession>Q97MP8</accession>
<feature type="chain" id="PRO_0000152277" description="Sugar fermentation stimulation protein homolog">
    <location>
        <begin position="1"/>
        <end position="230"/>
    </location>
</feature>